<sequence>MEGRGFSGLYKNSSEELFLKTVMESPIGMPVPTMEMLGFKTVSQSFRADSEELFKRWLTNEEGYNSTSMGLNSRLSKRISTELVNVSNQQHVGVASEGRNNDKSCLQNSFLTNDVSGDFNFPIREPVDRELQSGNLFLAKAWFLTDQRMTRSRSSELRRRYTEMQNTQAPQGLDSMFMAPKHDANIIKEELAHFNGFDYLSMCEIPSQKGSFMSPSNSSSSTFNTQQLVDVDKVSSCVSMLKGTLQRKRLECQVEKDAAEDGLNEIFGIREPLFQSGFNEGQENWNHQKLVNVQGDFTDQVKDTGVIETLEGAANFVLEGFANQTSQIHGGTASGEPSQSESSAAAPVISSGLDACEGPSNSSQTLCDSSWKQVGESTQNRAKGVREQIMDNLKDDRKRKRLERYGSVTSAVSDDKVDTTKKRRVERSRKMAEAKERNLTPTIPSDMQAVMKRCENLEKEVRSLKLNLSFMNRKDSEQTKQIEDLQKQNEELADEKERLLEEIERLLSETGKI</sequence>
<proteinExistence type="evidence at transcript level"/>
<reference key="1">
    <citation type="journal article" date="2008" name="Proc. Natl. Acad. Sci. U.S.A.">
        <title>CYCLOPS, a mediator of symbiotic intracellular accommodation.</title>
        <authorList>
            <person name="Yano K."/>
            <person name="Yoshida S."/>
            <person name="Mueller J."/>
            <person name="Singh S."/>
            <person name="Banba M."/>
            <person name="Vickers K."/>
            <person name="Markmann K."/>
            <person name="White C."/>
            <person name="Schuller B."/>
            <person name="Sato S."/>
            <person name="Asamizu E."/>
            <person name="Tabata S."/>
            <person name="Murooka Y."/>
            <person name="Perry J."/>
            <person name="Wang T.L."/>
            <person name="Kawaguchi M."/>
            <person name="Imaizumi-Anraku H."/>
            <person name="Hayashi M."/>
            <person name="Parniske M."/>
        </authorList>
    </citation>
    <scope>NUCLEOTIDE SEQUENCE [MRNA]</scope>
</reference>
<reference key="2">
    <citation type="journal article" date="1998" name="Mol. Gen. Genet.">
        <title>The pea (Pisum sativum L.) genes sym33 and sym40 control infection thread formation and root nodule function.</title>
        <authorList>
            <person name="Tsyganov V.E."/>
            <person name="Morzhina E.V."/>
            <person name="Stefanov S.Y."/>
            <person name="Borisov A.Y."/>
            <person name="Lebsky V.K."/>
            <person name="Tikhonovich I.A."/>
        </authorList>
    </citation>
    <scope>FUNCTION</scope>
    <scope>DISRUPTION PHENOTYPE</scope>
</reference>
<reference key="3">
    <citation type="journal article" date="2003" name="Mycorrhiza">
        <title>Effect of mutations in the pea genes Sym33 and Sym40. I. Arbuscular mycorrhiza formation and function.</title>
        <authorList>
            <person name="Jacobi L.M."/>
            <person name="Petrova O.S."/>
            <person name="Tsyganov V.E."/>
            <person name="Borisov A.Y."/>
            <person name="Tikhonovich I.A."/>
        </authorList>
    </citation>
    <scope>FUNCTION</scope>
</reference>
<reference key="4">
    <citation type="journal article" date="2003" name="Mycorrhiza">
        <title>Effect of mutations in the pea genes Sym33 and Sym40. II. Dynamics of arbuscule development and turnover.</title>
        <authorList>
            <person name="Jacobi L.M."/>
            <person name="Zubkova L.A."/>
            <person name="Barmicheva E.M."/>
            <person name="Tsyganov V.E."/>
            <person name="Borisov A.Y."/>
            <person name="Tikhonovich I.A."/>
        </authorList>
    </citation>
    <scope>FUNCTION</scope>
</reference>
<reference key="5">
    <citation type="journal article" date="2011" name="Mol. Plant Microbe Interact.">
        <title>IPD3 controls the formation of nitrogen-fixing symbiosomes in pea and Medicago Spp.</title>
        <authorList>
            <person name="Ovchinnikova E."/>
            <person name="Journet E.P."/>
            <person name="Chabaud M."/>
            <person name="Cosson V."/>
            <person name="Ratet P."/>
            <person name="Duc G."/>
            <person name="Fedorova E."/>
            <person name="Liu W."/>
            <person name="den Camp R.O."/>
            <person name="Zhukov V."/>
            <person name="Tikhonovich I."/>
            <person name="Borisov A."/>
            <person name="Bisseling T."/>
            <person name="Limpens E."/>
        </authorList>
    </citation>
    <scope>FUNCTION</scope>
</reference>
<evidence type="ECO:0000250" key="1">
    <source>
        <dbReference type="UniProtKB" id="A7TUE1"/>
    </source>
</evidence>
<evidence type="ECO:0000255" key="2"/>
<evidence type="ECO:0000256" key="3">
    <source>
        <dbReference type="SAM" id="MobiDB-lite"/>
    </source>
</evidence>
<evidence type="ECO:0000269" key="4">
    <source>
    </source>
</evidence>
<evidence type="ECO:0000269" key="5">
    <source>
    </source>
</evidence>
<evidence type="ECO:0000269" key="6">
    <source>
    </source>
</evidence>
<evidence type="ECO:0000269" key="7">
    <source>
    </source>
</evidence>
<evidence type="ECO:0000303" key="8">
    <source>
    </source>
</evidence>
<evidence type="ECO:0000303" key="9">
    <source>
    </source>
</evidence>
<evidence type="ECO:0000303" key="10">
    <source>
    </source>
</evidence>
<evidence type="ECO:0000305" key="11"/>
<gene>
    <name evidence="8" type="primary">CYCLOPS</name>
    <name evidence="9" type="synonym">IPD3</name>
    <name evidence="10" type="synonym">SYM33</name>
</gene>
<name>CCLOP_PEA</name>
<accession>A9XMT4</accession>
<comment type="function">
    <text evidence="4 5 6 7">Involved symbiotic signaling. Required for root infection by symbiotic rhizobia, infection thread (IT) formation, and nodule development (PubMed:9790580). Required for symbiosome formation (i.e. the release of the bacteria from the ITs) and subsequent symbiosome development (PubMed:21787150). Involved in arbuscular mycorrhizal (AM) symbiosis (PubMed:12634913, PubMed:12634914).</text>
</comment>
<comment type="subcellular location">
    <subcellularLocation>
        <location evidence="1">Nucleus</location>
    </subcellularLocation>
</comment>
<comment type="disruption phenotype">
    <text evidence="7">No visible phenotype under normal growth conditions, but roots of mutant plants are impaired in the interaction with rhizobia, specifically in infection thread (IT) formation in symbiotic roots.</text>
</comment>
<comment type="similarity">
    <text evidence="11">Belongs to the CYCLOPS family.</text>
</comment>
<feature type="chain" id="PRO_0000444704" description="Protein CYCLOPS">
    <location>
        <begin position="1"/>
        <end position="513"/>
    </location>
</feature>
<feature type="region of interest" description="Disordered" evidence="3">
    <location>
        <begin position="327"/>
        <end position="435"/>
    </location>
</feature>
<feature type="coiled-coil region" evidence="2">
    <location>
        <begin position="447"/>
        <end position="513"/>
    </location>
</feature>
<feature type="short sequence motif" description="Nuclear localization signal" evidence="2">
    <location>
        <begin position="397"/>
        <end position="401"/>
    </location>
</feature>
<feature type="short sequence motif" description="Nuclear localization signal" evidence="2">
    <location>
        <begin position="421"/>
        <end position="424"/>
    </location>
</feature>
<feature type="compositionally biased region" description="Low complexity" evidence="3">
    <location>
        <begin position="334"/>
        <end position="347"/>
    </location>
</feature>
<feature type="compositionally biased region" description="Polar residues" evidence="3">
    <location>
        <begin position="359"/>
        <end position="381"/>
    </location>
</feature>
<feature type="compositionally biased region" description="Basic and acidic residues" evidence="3">
    <location>
        <begin position="384"/>
        <end position="396"/>
    </location>
</feature>
<keyword id="KW-0175">Coiled coil</keyword>
<keyword id="KW-0536">Nodulation</keyword>
<keyword id="KW-0539">Nucleus</keyword>
<protein>
    <recommendedName>
        <fullName evidence="8">Protein CYCLOPS</fullName>
        <shortName evidence="8">PsCYCLOPS</shortName>
    </recommendedName>
    <alternativeName>
        <fullName evidence="9">Protein IPD3 homolog</fullName>
        <shortName evidence="9">PsIPD3</shortName>
    </alternativeName>
    <alternativeName>
        <fullName evidence="9">PsSYM33</fullName>
    </alternativeName>
</protein>
<dbReference type="EMBL" id="EF569222">
    <property type="protein sequence ID" value="ABU63669.1"/>
    <property type="molecule type" value="mRNA"/>
</dbReference>
<dbReference type="SMR" id="A9XMT4"/>
<dbReference type="GO" id="GO:0005634">
    <property type="term" value="C:nucleus"/>
    <property type="evidence" value="ECO:0007669"/>
    <property type="project" value="UniProtKB-SubCell"/>
</dbReference>
<dbReference type="GO" id="GO:0043565">
    <property type="term" value="F:sequence-specific DNA binding"/>
    <property type="evidence" value="ECO:0007669"/>
    <property type="project" value="InterPro"/>
</dbReference>
<dbReference type="GO" id="GO:0036377">
    <property type="term" value="P:arbuscular mycorrhizal association"/>
    <property type="evidence" value="ECO:0000315"/>
    <property type="project" value="UniProtKB"/>
</dbReference>
<dbReference type="GO" id="GO:0009877">
    <property type="term" value="P:nodulation"/>
    <property type="evidence" value="ECO:0000315"/>
    <property type="project" value="UniProtKB"/>
</dbReference>
<dbReference type="InterPro" id="IPR040036">
    <property type="entry name" value="CYCLOPS"/>
</dbReference>
<dbReference type="PANTHER" id="PTHR36890">
    <property type="entry name" value="PROTEIN CYCLOPS"/>
    <property type="match status" value="1"/>
</dbReference>
<dbReference type="PANTHER" id="PTHR36890:SF1">
    <property type="entry name" value="PROTEIN CYCLOPS"/>
    <property type="match status" value="1"/>
</dbReference>
<organism>
    <name type="scientific">Pisum sativum</name>
    <name type="common">Garden pea</name>
    <name type="synonym">Lathyrus oleraceus</name>
    <dbReference type="NCBI Taxonomy" id="3888"/>
    <lineage>
        <taxon>Eukaryota</taxon>
        <taxon>Viridiplantae</taxon>
        <taxon>Streptophyta</taxon>
        <taxon>Embryophyta</taxon>
        <taxon>Tracheophyta</taxon>
        <taxon>Spermatophyta</taxon>
        <taxon>Magnoliopsida</taxon>
        <taxon>eudicotyledons</taxon>
        <taxon>Gunneridae</taxon>
        <taxon>Pentapetalae</taxon>
        <taxon>rosids</taxon>
        <taxon>fabids</taxon>
        <taxon>Fabales</taxon>
        <taxon>Fabaceae</taxon>
        <taxon>Papilionoideae</taxon>
        <taxon>50 kb inversion clade</taxon>
        <taxon>NPAAA clade</taxon>
        <taxon>Hologalegina</taxon>
        <taxon>IRL clade</taxon>
        <taxon>Fabeae</taxon>
        <taxon>Pisum</taxon>
    </lineage>
</organism>